<gene>
    <name evidence="1" type="primary">gpsA</name>
    <name type="ordered locus">AZOSEA05600</name>
    <name type="ORF">ebA1060</name>
</gene>
<name>GPDA_AROAE</name>
<accession>Q5P7M9</accession>
<protein>
    <recommendedName>
        <fullName evidence="1">Glycerol-3-phosphate dehydrogenase [NAD(P)+]</fullName>
        <ecNumber evidence="1">1.1.1.94</ecNumber>
    </recommendedName>
    <alternativeName>
        <fullName evidence="1">NAD(P)(+)-dependent glycerol-3-phosphate dehydrogenase</fullName>
    </alternativeName>
    <alternativeName>
        <fullName evidence="1">NAD(P)H-dependent dihydroxyacetone-phosphate reductase</fullName>
    </alternativeName>
</protein>
<proteinExistence type="inferred from homology"/>
<keyword id="KW-0963">Cytoplasm</keyword>
<keyword id="KW-0444">Lipid biosynthesis</keyword>
<keyword id="KW-0443">Lipid metabolism</keyword>
<keyword id="KW-0520">NAD</keyword>
<keyword id="KW-0521">NADP</keyword>
<keyword id="KW-0547">Nucleotide-binding</keyword>
<keyword id="KW-0560">Oxidoreductase</keyword>
<keyword id="KW-0594">Phospholipid biosynthesis</keyword>
<keyword id="KW-1208">Phospholipid metabolism</keyword>
<keyword id="KW-1185">Reference proteome</keyword>
<comment type="function">
    <text evidence="1">Catalyzes the reduction of the glycolytic intermediate dihydroxyacetone phosphate (DHAP) to sn-glycerol 3-phosphate (G3P), the key precursor for phospholipid synthesis.</text>
</comment>
<comment type="catalytic activity">
    <reaction evidence="1">
        <text>sn-glycerol 3-phosphate + NAD(+) = dihydroxyacetone phosphate + NADH + H(+)</text>
        <dbReference type="Rhea" id="RHEA:11092"/>
        <dbReference type="ChEBI" id="CHEBI:15378"/>
        <dbReference type="ChEBI" id="CHEBI:57540"/>
        <dbReference type="ChEBI" id="CHEBI:57597"/>
        <dbReference type="ChEBI" id="CHEBI:57642"/>
        <dbReference type="ChEBI" id="CHEBI:57945"/>
        <dbReference type="EC" id="1.1.1.94"/>
    </reaction>
    <physiologicalReaction direction="right-to-left" evidence="1">
        <dbReference type="Rhea" id="RHEA:11094"/>
    </physiologicalReaction>
</comment>
<comment type="catalytic activity">
    <reaction evidence="1">
        <text>sn-glycerol 3-phosphate + NADP(+) = dihydroxyacetone phosphate + NADPH + H(+)</text>
        <dbReference type="Rhea" id="RHEA:11096"/>
        <dbReference type="ChEBI" id="CHEBI:15378"/>
        <dbReference type="ChEBI" id="CHEBI:57597"/>
        <dbReference type="ChEBI" id="CHEBI:57642"/>
        <dbReference type="ChEBI" id="CHEBI:57783"/>
        <dbReference type="ChEBI" id="CHEBI:58349"/>
        <dbReference type="EC" id="1.1.1.94"/>
    </reaction>
    <physiologicalReaction direction="right-to-left" evidence="1">
        <dbReference type="Rhea" id="RHEA:11098"/>
    </physiologicalReaction>
</comment>
<comment type="pathway">
    <text evidence="1">Membrane lipid metabolism; glycerophospholipid metabolism.</text>
</comment>
<comment type="subcellular location">
    <subcellularLocation>
        <location evidence="1">Cytoplasm</location>
    </subcellularLocation>
</comment>
<comment type="similarity">
    <text evidence="1">Belongs to the NAD-dependent glycerol-3-phosphate dehydrogenase family.</text>
</comment>
<dbReference type="EC" id="1.1.1.94" evidence="1"/>
<dbReference type="EMBL" id="CR555306">
    <property type="protein sequence ID" value="CAI06682.1"/>
    <property type="molecule type" value="Genomic_DNA"/>
</dbReference>
<dbReference type="RefSeq" id="WP_011236412.1">
    <property type="nucleotide sequence ID" value="NC_006513.1"/>
</dbReference>
<dbReference type="SMR" id="Q5P7M9"/>
<dbReference type="STRING" id="76114.ebA1060"/>
<dbReference type="KEGG" id="eba:ebA1060"/>
<dbReference type="eggNOG" id="COG0240">
    <property type="taxonomic scope" value="Bacteria"/>
</dbReference>
<dbReference type="HOGENOM" id="CLU_033449_0_2_4"/>
<dbReference type="UniPathway" id="UPA00940"/>
<dbReference type="Proteomes" id="UP000006552">
    <property type="component" value="Chromosome"/>
</dbReference>
<dbReference type="GO" id="GO:0005829">
    <property type="term" value="C:cytosol"/>
    <property type="evidence" value="ECO:0007669"/>
    <property type="project" value="TreeGrafter"/>
</dbReference>
<dbReference type="GO" id="GO:0047952">
    <property type="term" value="F:glycerol-3-phosphate dehydrogenase [NAD(P)+] activity"/>
    <property type="evidence" value="ECO:0007669"/>
    <property type="project" value="UniProtKB-UniRule"/>
</dbReference>
<dbReference type="GO" id="GO:0051287">
    <property type="term" value="F:NAD binding"/>
    <property type="evidence" value="ECO:0007669"/>
    <property type="project" value="InterPro"/>
</dbReference>
<dbReference type="GO" id="GO:0005975">
    <property type="term" value="P:carbohydrate metabolic process"/>
    <property type="evidence" value="ECO:0007669"/>
    <property type="project" value="InterPro"/>
</dbReference>
<dbReference type="GO" id="GO:0046167">
    <property type="term" value="P:glycerol-3-phosphate biosynthetic process"/>
    <property type="evidence" value="ECO:0007669"/>
    <property type="project" value="UniProtKB-UniRule"/>
</dbReference>
<dbReference type="GO" id="GO:0046168">
    <property type="term" value="P:glycerol-3-phosphate catabolic process"/>
    <property type="evidence" value="ECO:0007669"/>
    <property type="project" value="InterPro"/>
</dbReference>
<dbReference type="GO" id="GO:0006650">
    <property type="term" value="P:glycerophospholipid metabolic process"/>
    <property type="evidence" value="ECO:0007669"/>
    <property type="project" value="UniProtKB-UniRule"/>
</dbReference>
<dbReference type="GO" id="GO:0008654">
    <property type="term" value="P:phospholipid biosynthetic process"/>
    <property type="evidence" value="ECO:0007669"/>
    <property type="project" value="UniProtKB-KW"/>
</dbReference>
<dbReference type="FunFam" id="1.10.1040.10:FF:000001">
    <property type="entry name" value="Glycerol-3-phosphate dehydrogenase [NAD(P)+]"/>
    <property type="match status" value="1"/>
</dbReference>
<dbReference type="FunFam" id="3.40.50.720:FF:000019">
    <property type="entry name" value="Glycerol-3-phosphate dehydrogenase [NAD(P)+]"/>
    <property type="match status" value="1"/>
</dbReference>
<dbReference type="Gene3D" id="1.10.1040.10">
    <property type="entry name" value="N-(1-d-carboxylethyl)-l-norvaline Dehydrogenase, domain 2"/>
    <property type="match status" value="1"/>
</dbReference>
<dbReference type="Gene3D" id="3.40.50.720">
    <property type="entry name" value="NAD(P)-binding Rossmann-like Domain"/>
    <property type="match status" value="1"/>
</dbReference>
<dbReference type="HAMAP" id="MF_00394">
    <property type="entry name" value="NAD_Glyc3P_dehydrog"/>
    <property type="match status" value="1"/>
</dbReference>
<dbReference type="InterPro" id="IPR008927">
    <property type="entry name" value="6-PGluconate_DH-like_C_sf"/>
</dbReference>
<dbReference type="InterPro" id="IPR013328">
    <property type="entry name" value="6PGD_dom2"/>
</dbReference>
<dbReference type="InterPro" id="IPR006168">
    <property type="entry name" value="G3P_DH_NAD-dep"/>
</dbReference>
<dbReference type="InterPro" id="IPR006109">
    <property type="entry name" value="G3P_DH_NAD-dep_C"/>
</dbReference>
<dbReference type="InterPro" id="IPR011128">
    <property type="entry name" value="G3P_DH_NAD-dep_N"/>
</dbReference>
<dbReference type="InterPro" id="IPR036291">
    <property type="entry name" value="NAD(P)-bd_dom_sf"/>
</dbReference>
<dbReference type="NCBIfam" id="NF000940">
    <property type="entry name" value="PRK00094.1-2"/>
    <property type="match status" value="1"/>
</dbReference>
<dbReference type="NCBIfam" id="NF000942">
    <property type="entry name" value="PRK00094.1-4"/>
    <property type="match status" value="1"/>
</dbReference>
<dbReference type="PANTHER" id="PTHR11728">
    <property type="entry name" value="GLYCEROL-3-PHOSPHATE DEHYDROGENASE"/>
    <property type="match status" value="1"/>
</dbReference>
<dbReference type="PANTHER" id="PTHR11728:SF1">
    <property type="entry name" value="GLYCEROL-3-PHOSPHATE DEHYDROGENASE [NAD(+)] 2, CHLOROPLASTIC"/>
    <property type="match status" value="1"/>
</dbReference>
<dbReference type="Pfam" id="PF07479">
    <property type="entry name" value="NAD_Gly3P_dh_C"/>
    <property type="match status" value="1"/>
</dbReference>
<dbReference type="Pfam" id="PF01210">
    <property type="entry name" value="NAD_Gly3P_dh_N"/>
    <property type="match status" value="1"/>
</dbReference>
<dbReference type="PIRSF" id="PIRSF000114">
    <property type="entry name" value="Glycerol-3-P_dh"/>
    <property type="match status" value="1"/>
</dbReference>
<dbReference type="PRINTS" id="PR00077">
    <property type="entry name" value="GPDHDRGNASE"/>
</dbReference>
<dbReference type="SUPFAM" id="SSF48179">
    <property type="entry name" value="6-phosphogluconate dehydrogenase C-terminal domain-like"/>
    <property type="match status" value="1"/>
</dbReference>
<dbReference type="SUPFAM" id="SSF51735">
    <property type="entry name" value="NAD(P)-binding Rossmann-fold domains"/>
    <property type="match status" value="1"/>
</dbReference>
<dbReference type="PROSITE" id="PS00957">
    <property type="entry name" value="NAD_G3PDH"/>
    <property type="match status" value="1"/>
</dbReference>
<feature type="chain" id="PRO_0000255281" description="Glycerol-3-phosphate dehydrogenase [NAD(P)+]">
    <location>
        <begin position="1"/>
        <end position="328"/>
    </location>
</feature>
<feature type="active site" description="Proton acceptor" evidence="1">
    <location>
        <position position="187"/>
    </location>
</feature>
<feature type="binding site" evidence="1">
    <location>
        <position position="11"/>
    </location>
    <ligand>
        <name>NADPH</name>
        <dbReference type="ChEBI" id="CHEBI:57783"/>
    </ligand>
</feature>
<feature type="binding site" evidence="1">
    <location>
        <position position="30"/>
    </location>
    <ligand>
        <name>NADPH</name>
        <dbReference type="ChEBI" id="CHEBI:57783"/>
    </ligand>
</feature>
<feature type="binding site" evidence="1">
    <location>
        <position position="103"/>
    </location>
    <ligand>
        <name>NADPH</name>
        <dbReference type="ChEBI" id="CHEBI:57783"/>
    </ligand>
</feature>
<feature type="binding site" evidence="1">
    <location>
        <position position="103"/>
    </location>
    <ligand>
        <name>sn-glycerol 3-phosphate</name>
        <dbReference type="ChEBI" id="CHEBI:57597"/>
    </ligand>
</feature>
<feature type="binding site" evidence="1">
    <location>
        <position position="132"/>
    </location>
    <ligand>
        <name>sn-glycerol 3-phosphate</name>
        <dbReference type="ChEBI" id="CHEBI:57597"/>
    </ligand>
</feature>
<feature type="binding site" evidence="1">
    <location>
        <position position="134"/>
    </location>
    <ligand>
        <name>sn-glycerol 3-phosphate</name>
        <dbReference type="ChEBI" id="CHEBI:57597"/>
    </ligand>
</feature>
<feature type="binding site" evidence="1">
    <location>
        <position position="136"/>
    </location>
    <ligand>
        <name>NADPH</name>
        <dbReference type="ChEBI" id="CHEBI:57783"/>
    </ligand>
</feature>
<feature type="binding site" evidence="1">
    <location>
        <position position="187"/>
    </location>
    <ligand>
        <name>sn-glycerol 3-phosphate</name>
        <dbReference type="ChEBI" id="CHEBI:57597"/>
    </ligand>
</feature>
<feature type="binding site" evidence="1">
    <location>
        <position position="240"/>
    </location>
    <ligand>
        <name>sn-glycerol 3-phosphate</name>
        <dbReference type="ChEBI" id="CHEBI:57597"/>
    </ligand>
</feature>
<feature type="binding site" evidence="1">
    <location>
        <position position="250"/>
    </location>
    <ligand>
        <name>sn-glycerol 3-phosphate</name>
        <dbReference type="ChEBI" id="CHEBI:57597"/>
    </ligand>
</feature>
<feature type="binding site" evidence="1">
    <location>
        <position position="251"/>
    </location>
    <ligand>
        <name>NADPH</name>
        <dbReference type="ChEBI" id="CHEBI:57783"/>
    </ligand>
</feature>
<feature type="binding site" evidence="1">
    <location>
        <position position="251"/>
    </location>
    <ligand>
        <name>sn-glycerol 3-phosphate</name>
        <dbReference type="ChEBI" id="CHEBI:57597"/>
    </ligand>
</feature>
<feature type="binding site" evidence="1">
    <location>
        <position position="252"/>
    </location>
    <ligand>
        <name>sn-glycerol 3-phosphate</name>
        <dbReference type="ChEBI" id="CHEBI:57597"/>
    </ligand>
</feature>
<feature type="binding site" evidence="1">
    <location>
        <position position="275"/>
    </location>
    <ligand>
        <name>NADPH</name>
        <dbReference type="ChEBI" id="CHEBI:57783"/>
    </ligand>
</feature>
<feature type="binding site" evidence="1">
    <location>
        <position position="277"/>
    </location>
    <ligand>
        <name>NADPH</name>
        <dbReference type="ChEBI" id="CHEBI:57783"/>
    </ligand>
</feature>
<reference key="1">
    <citation type="journal article" date="2005" name="Arch. Microbiol.">
        <title>The genome sequence of an anaerobic aromatic-degrading denitrifying bacterium, strain EbN1.</title>
        <authorList>
            <person name="Rabus R."/>
            <person name="Kube M."/>
            <person name="Heider J."/>
            <person name="Beck A."/>
            <person name="Heitmann K."/>
            <person name="Widdel F."/>
            <person name="Reinhardt R."/>
        </authorList>
    </citation>
    <scope>NUCLEOTIDE SEQUENCE [LARGE SCALE GENOMIC DNA]</scope>
    <source>
        <strain>DSM 19018 / LMG 30748 / EbN1</strain>
    </source>
</reference>
<organism>
    <name type="scientific">Aromatoleum aromaticum (strain DSM 19018 / LMG 30748 / EbN1)</name>
    <name type="common">Azoarcus sp. (strain EbN1)</name>
    <dbReference type="NCBI Taxonomy" id="76114"/>
    <lineage>
        <taxon>Bacteria</taxon>
        <taxon>Pseudomonadati</taxon>
        <taxon>Pseudomonadota</taxon>
        <taxon>Betaproteobacteria</taxon>
        <taxon>Rhodocyclales</taxon>
        <taxon>Rhodocyclaceae</taxon>
        <taxon>Aromatoleum</taxon>
    </lineage>
</organism>
<evidence type="ECO:0000255" key="1">
    <source>
        <dbReference type="HAMAP-Rule" id="MF_00394"/>
    </source>
</evidence>
<sequence length="328" mass="34334">MRIAVFGAGAWGTALALAFSARHDVVLWGRDAGHIDTLAATRHNERYLPGVPFPEELALTADFAAAARAADLHLVVTPLAGLRAAVGELNTLQPDTPLIWACKGLEAGTGKLPHEIVAEELGPAARCGVLTGPSFAAEVARAMPTAVTLAATDPAFARRWVPALHQPRLRIYANSDLVGAEIGGAIKNVLAIAAGVSDGMGFGLNARAALITRGLAEIARLAEALGGRPETLMGLAGMGDLILTCTGDLSRNRRVGLALAQGKTLAEILGELGHVAEGVSTAREVVKLAARHDVEMPLCEAVDTLLHDARLGPREVVEQLLSREPRRE</sequence>